<name>PVK2_BISPU</name>
<comment type="function">
    <text evidence="1">Mediates visceral muscle contractile activity (myotropic activity).</text>
</comment>
<comment type="subcellular location">
    <subcellularLocation>
        <location evidence="2">Secreted</location>
    </subcellularLocation>
</comment>
<comment type="mass spectrometry" mass="1102.6" method="MALDI" evidence="4"/>
<comment type="miscellaneous">
    <text evidence="4">According to PubMed:19808072, a longer form of this peptide exists.</text>
</comment>
<comment type="similarity">
    <text evidence="3">Belongs to the periviscerokinin family.</text>
</comment>
<reference evidence="6" key="1">
    <citation type="journal article" date="2010" name="Peptides">
        <title>CAPA-peptides of praying mantids (Mantodea).</title>
        <authorList>
            <person name="Koehler R."/>
            <person name="Predel R."/>
        </authorList>
    </citation>
    <scope>PROTEIN SEQUENCE</scope>
    <scope>MASS SPECTROMETRY</scope>
    <scope>AMIDATION AT VAL-11</scope>
    <source>
        <tissue evidence="4">Abdominal perisympathetic organs</tissue>
    </source>
</reference>
<feature type="peptide" id="PRO_0000395580" description="Periviscerokinin-2" evidence="4">
    <location>
        <begin position="1"/>
        <end position="11"/>
    </location>
</feature>
<feature type="modified residue" description="Valine amide" evidence="4">
    <location>
        <position position="11"/>
    </location>
</feature>
<feature type="unsure residue" description="L or I" evidence="4">
    <location>
        <position position="5"/>
    </location>
</feature>
<feature type="unsure residue" description="I or L" evidence="4">
    <location>
        <position position="6"/>
    </location>
</feature>
<protein>
    <recommendedName>
        <fullName evidence="5">Periviscerokinin-2</fullName>
    </recommendedName>
</protein>
<dbReference type="GO" id="GO:0005576">
    <property type="term" value="C:extracellular region"/>
    <property type="evidence" value="ECO:0007669"/>
    <property type="project" value="UniProtKB-SubCell"/>
</dbReference>
<dbReference type="GO" id="GO:0007218">
    <property type="term" value="P:neuropeptide signaling pathway"/>
    <property type="evidence" value="ECO:0007669"/>
    <property type="project" value="UniProtKB-KW"/>
</dbReference>
<dbReference type="InterPro" id="IPR013231">
    <property type="entry name" value="Periviscerokinin"/>
</dbReference>
<dbReference type="Pfam" id="PF08259">
    <property type="entry name" value="Periviscerokin"/>
    <property type="match status" value="1"/>
</dbReference>
<accession>P86645</accession>
<organism>
    <name type="scientific">Bisanthe pulchripennis</name>
    <name type="common">Praying mantis</name>
    <dbReference type="NCBI Taxonomy" id="765342"/>
    <lineage>
        <taxon>Eukaryota</taxon>
        <taxon>Metazoa</taxon>
        <taxon>Ecdysozoa</taxon>
        <taxon>Arthropoda</taxon>
        <taxon>Hexapoda</taxon>
        <taxon>Insecta</taxon>
        <taxon>Pterygota</taxon>
        <taxon>Neoptera</taxon>
        <taxon>Polyneoptera</taxon>
        <taxon>Dictyoptera</taxon>
        <taxon>Mantodea</taxon>
        <taxon>Eumantodea</taxon>
        <taxon>Mantoidea</taxon>
        <taxon>Mantidae</taxon>
        <taxon>Tenoderinae</taxon>
        <taxon>Paramantini</taxon>
        <taxon>Bisanthe</taxon>
    </lineage>
</organism>
<evidence type="ECO:0000250" key="1">
    <source>
        <dbReference type="UniProtKB" id="P83923"/>
    </source>
</evidence>
<evidence type="ECO:0000250" key="2">
    <source>
        <dbReference type="UniProtKB" id="P84375"/>
    </source>
</evidence>
<evidence type="ECO:0000255" key="3"/>
<evidence type="ECO:0000269" key="4">
    <source>
    </source>
</evidence>
<evidence type="ECO:0000303" key="5">
    <source>
    </source>
</evidence>
<evidence type="ECO:0000305" key="6"/>
<keyword id="KW-0027">Amidation</keyword>
<keyword id="KW-0903">Direct protein sequencing</keyword>
<keyword id="KW-0527">Neuropeptide</keyword>
<keyword id="KW-0964">Secreted</keyword>
<proteinExistence type="evidence at protein level"/>
<sequence length="11" mass="1103">GASGLISFPRV</sequence>